<name>GLGB_NITEU</name>
<dbReference type="EC" id="2.4.1.18" evidence="1"/>
<dbReference type="EMBL" id="AL954747">
    <property type="protein sequence ID" value="CAD85940.1"/>
    <property type="molecule type" value="Genomic_DNA"/>
</dbReference>
<dbReference type="RefSeq" id="WP_011112545.1">
    <property type="nucleotide sequence ID" value="NC_004757.1"/>
</dbReference>
<dbReference type="SMR" id="Q81ZU6"/>
<dbReference type="STRING" id="228410.NE2029"/>
<dbReference type="CAZy" id="CBM48">
    <property type="family name" value="Carbohydrate-Binding Module Family 48"/>
</dbReference>
<dbReference type="CAZy" id="GH13">
    <property type="family name" value="Glycoside Hydrolase Family 13"/>
</dbReference>
<dbReference type="GeneID" id="87105167"/>
<dbReference type="KEGG" id="neu:NE2029"/>
<dbReference type="eggNOG" id="COG0296">
    <property type="taxonomic scope" value="Bacteria"/>
</dbReference>
<dbReference type="HOGENOM" id="CLU_004245_3_2_4"/>
<dbReference type="OrthoDB" id="9800174at2"/>
<dbReference type="PhylomeDB" id="Q81ZU6"/>
<dbReference type="UniPathway" id="UPA00164"/>
<dbReference type="Proteomes" id="UP000001416">
    <property type="component" value="Chromosome"/>
</dbReference>
<dbReference type="GO" id="GO:0005829">
    <property type="term" value="C:cytosol"/>
    <property type="evidence" value="ECO:0007669"/>
    <property type="project" value="TreeGrafter"/>
</dbReference>
<dbReference type="GO" id="GO:0003844">
    <property type="term" value="F:1,4-alpha-glucan branching enzyme activity"/>
    <property type="evidence" value="ECO:0007669"/>
    <property type="project" value="UniProtKB-UniRule"/>
</dbReference>
<dbReference type="GO" id="GO:0043169">
    <property type="term" value="F:cation binding"/>
    <property type="evidence" value="ECO:0007669"/>
    <property type="project" value="InterPro"/>
</dbReference>
<dbReference type="GO" id="GO:0004553">
    <property type="term" value="F:hydrolase activity, hydrolyzing O-glycosyl compounds"/>
    <property type="evidence" value="ECO:0007669"/>
    <property type="project" value="InterPro"/>
</dbReference>
<dbReference type="GO" id="GO:0005978">
    <property type="term" value="P:glycogen biosynthetic process"/>
    <property type="evidence" value="ECO:0007669"/>
    <property type="project" value="UniProtKB-UniRule"/>
</dbReference>
<dbReference type="CDD" id="cd11322">
    <property type="entry name" value="AmyAc_Glg_BE"/>
    <property type="match status" value="1"/>
</dbReference>
<dbReference type="CDD" id="cd02855">
    <property type="entry name" value="E_set_GBE_prok_N"/>
    <property type="match status" value="1"/>
</dbReference>
<dbReference type="FunFam" id="2.60.40.10:FF:000169">
    <property type="entry name" value="1,4-alpha-glucan branching enzyme GlgB"/>
    <property type="match status" value="1"/>
</dbReference>
<dbReference type="FunFam" id="2.60.40.1180:FF:000002">
    <property type="entry name" value="1,4-alpha-glucan branching enzyme GlgB"/>
    <property type="match status" value="1"/>
</dbReference>
<dbReference type="FunFam" id="3.20.20.80:FF:000003">
    <property type="entry name" value="1,4-alpha-glucan branching enzyme GlgB"/>
    <property type="match status" value="1"/>
</dbReference>
<dbReference type="Gene3D" id="3.20.20.80">
    <property type="entry name" value="Glycosidases"/>
    <property type="match status" value="1"/>
</dbReference>
<dbReference type="Gene3D" id="2.60.40.1180">
    <property type="entry name" value="Golgi alpha-mannosidase II"/>
    <property type="match status" value="1"/>
</dbReference>
<dbReference type="Gene3D" id="2.60.40.10">
    <property type="entry name" value="Immunoglobulins"/>
    <property type="match status" value="1"/>
</dbReference>
<dbReference type="HAMAP" id="MF_00685">
    <property type="entry name" value="GlgB"/>
    <property type="match status" value="1"/>
</dbReference>
<dbReference type="InterPro" id="IPR006048">
    <property type="entry name" value="A-amylase/branching_C"/>
</dbReference>
<dbReference type="InterPro" id="IPR037439">
    <property type="entry name" value="Branching_enzy"/>
</dbReference>
<dbReference type="InterPro" id="IPR006407">
    <property type="entry name" value="GlgB"/>
</dbReference>
<dbReference type="InterPro" id="IPR054169">
    <property type="entry name" value="GlgB_N"/>
</dbReference>
<dbReference type="InterPro" id="IPR044143">
    <property type="entry name" value="GlgB_N_E_set_prok"/>
</dbReference>
<dbReference type="InterPro" id="IPR006047">
    <property type="entry name" value="Glyco_hydro_13_cat_dom"/>
</dbReference>
<dbReference type="InterPro" id="IPR004193">
    <property type="entry name" value="Glyco_hydro_13_N"/>
</dbReference>
<dbReference type="InterPro" id="IPR013780">
    <property type="entry name" value="Glyco_hydro_b"/>
</dbReference>
<dbReference type="InterPro" id="IPR017853">
    <property type="entry name" value="Glycoside_hydrolase_SF"/>
</dbReference>
<dbReference type="InterPro" id="IPR013783">
    <property type="entry name" value="Ig-like_fold"/>
</dbReference>
<dbReference type="InterPro" id="IPR014756">
    <property type="entry name" value="Ig_E-set"/>
</dbReference>
<dbReference type="NCBIfam" id="TIGR01515">
    <property type="entry name" value="branching_enzym"/>
    <property type="match status" value="1"/>
</dbReference>
<dbReference type="NCBIfam" id="NF003811">
    <property type="entry name" value="PRK05402.1"/>
    <property type="match status" value="1"/>
</dbReference>
<dbReference type="NCBIfam" id="NF008967">
    <property type="entry name" value="PRK12313.1"/>
    <property type="match status" value="1"/>
</dbReference>
<dbReference type="PANTHER" id="PTHR43651">
    <property type="entry name" value="1,4-ALPHA-GLUCAN-BRANCHING ENZYME"/>
    <property type="match status" value="1"/>
</dbReference>
<dbReference type="PANTHER" id="PTHR43651:SF3">
    <property type="entry name" value="1,4-ALPHA-GLUCAN-BRANCHING ENZYME"/>
    <property type="match status" value="1"/>
</dbReference>
<dbReference type="Pfam" id="PF00128">
    <property type="entry name" value="Alpha-amylase"/>
    <property type="match status" value="2"/>
</dbReference>
<dbReference type="Pfam" id="PF02806">
    <property type="entry name" value="Alpha-amylase_C"/>
    <property type="match status" value="1"/>
</dbReference>
<dbReference type="Pfam" id="PF02922">
    <property type="entry name" value="CBM_48"/>
    <property type="match status" value="1"/>
</dbReference>
<dbReference type="Pfam" id="PF22019">
    <property type="entry name" value="GlgB_N"/>
    <property type="match status" value="1"/>
</dbReference>
<dbReference type="PIRSF" id="PIRSF000463">
    <property type="entry name" value="GlgB"/>
    <property type="match status" value="1"/>
</dbReference>
<dbReference type="SMART" id="SM00642">
    <property type="entry name" value="Aamy"/>
    <property type="match status" value="1"/>
</dbReference>
<dbReference type="SUPFAM" id="SSF51445">
    <property type="entry name" value="(Trans)glycosidases"/>
    <property type="match status" value="1"/>
</dbReference>
<dbReference type="SUPFAM" id="SSF81296">
    <property type="entry name" value="E set domains"/>
    <property type="match status" value="1"/>
</dbReference>
<dbReference type="SUPFAM" id="SSF51011">
    <property type="entry name" value="Glycosyl hydrolase domain"/>
    <property type="match status" value="1"/>
</dbReference>
<gene>
    <name evidence="1" type="primary">glgB</name>
    <name type="ordered locus">NE2029</name>
</gene>
<organism>
    <name type="scientific">Nitrosomonas europaea (strain ATCC 19718 / CIP 103999 / KCTC 2705 / NBRC 14298)</name>
    <dbReference type="NCBI Taxonomy" id="228410"/>
    <lineage>
        <taxon>Bacteria</taxon>
        <taxon>Pseudomonadati</taxon>
        <taxon>Pseudomonadota</taxon>
        <taxon>Betaproteobacteria</taxon>
        <taxon>Nitrosomonadales</taxon>
        <taxon>Nitrosomonadaceae</taxon>
        <taxon>Nitrosomonas</taxon>
    </lineage>
</organism>
<keyword id="KW-0119">Carbohydrate metabolism</keyword>
<keyword id="KW-0320">Glycogen biosynthesis</keyword>
<keyword id="KW-0321">Glycogen metabolism</keyword>
<keyword id="KW-0328">Glycosyltransferase</keyword>
<keyword id="KW-1185">Reference proteome</keyword>
<keyword id="KW-0808">Transferase</keyword>
<evidence type="ECO:0000255" key="1">
    <source>
        <dbReference type="HAMAP-Rule" id="MF_00685"/>
    </source>
</evidence>
<protein>
    <recommendedName>
        <fullName evidence="1">1,4-alpha-glucan branching enzyme GlgB</fullName>
        <ecNumber evidence="1">2.4.1.18</ecNumber>
    </recommendedName>
    <alternativeName>
        <fullName evidence="1">1,4-alpha-D-glucan:1,4-alpha-D-glucan 6-glucosyl-transferase</fullName>
    </alternativeName>
    <alternativeName>
        <fullName evidence="1">Alpha-(1-&gt;4)-glucan branching enzyme</fullName>
    </alternativeName>
    <alternativeName>
        <fullName evidence="1">Glycogen branching enzyme</fullName>
        <shortName evidence="1">BE</shortName>
    </alternativeName>
</protein>
<sequence length="734" mass="84102">MKSLSSSSPGSSEDSAQSLLLTARLYDPCSFLGMHAAPNGRLIRVFQPYMSRVWLHTLSGYQPMRSVHQDGIFEWEGEGVMHPYLLRMENTATGVIEERHDPYAFPMQISGHDLYLFNEGRLLQAYHMLGAHRVRNHGVTGTRFAVWAPNAERVSVVGDFNRWDGRVYPMMVHGHSGVWELFIPDLPEGAIYKYEIRNRISGEILLKTDPYATTYELRPNNAALTPIEQKYDWKDDDWIARRKGWDWLHAPLNIYELHVGSWKRHPDGRFYSYHELADHLIPYLQDMGYSHVELLPISEHPLDESWGYQATGYFAVTSRYGSPEAFMSFVDRCHQAGIGVILDWVPAHFPQDSFSLARFDGTALYEHEDPRLGYHHDWGTYIFNYGRNEVKSFLLSSAHYWLSAFHIDGLRVDAVASMLYLNYSRKEGEWLPNRYGGHENLEAIEFLRALNTMVHGEFPGALTFAEESTSWPAVSRPAYLGGLGFSMKWNMGWMNDTLSYMQHDPVHRRYHHNELTFNQLYAYTENFVLPLSHDEVVHGKKSMLDKMPGDGWQKFANLRLLFTYQMTCPGKKINFMGNELGQGHEWRVGHELDWYLLERDPHRGIQALTRDLNHLYLNTPALHELDFFAEGFSWIDCHDVEQSVISYQRHARDGSFVLVVLNFTPILRTGYRVGIPGSSAYQEVFNSDSIYYDGSNAGNAGKISPTGQPWSGQPDSIIITLPPLAGVILKAADG</sequence>
<proteinExistence type="inferred from homology"/>
<accession>Q81ZU6</accession>
<comment type="function">
    <text evidence="1">Catalyzes the formation of the alpha-1,6-glucosidic linkages in glycogen by scission of a 1,4-alpha-linked oligosaccharide from growing alpha-1,4-glucan chains and the subsequent attachment of the oligosaccharide to the alpha-1,6 position.</text>
</comment>
<comment type="catalytic activity">
    <reaction evidence="1">
        <text>Transfers a segment of a (1-&gt;4)-alpha-D-glucan chain to a primary hydroxy group in a similar glucan chain.</text>
        <dbReference type="EC" id="2.4.1.18"/>
    </reaction>
</comment>
<comment type="pathway">
    <text evidence="1">Glycan biosynthesis; glycogen biosynthesis.</text>
</comment>
<comment type="subunit">
    <text evidence="1">Monomer.</text>
</comment>
<comment type="similarity">
    <text evidence="1">Belongs to the glycosyl hydrolase 13 family. GlgB subfamily.</text>
</comment>
<feature type="chain" id="PRO_0000188720" description="1,4-alpha-glucan branching enzyme GlgB">
    <location>
        <begin position="1"/>
        <end position="734"/>
    </location>
</feature>
<feature type="active site" description="Nucleophile" evidence="1">
    <location>
        <position position="413"/>
    </location>
</feature>
<feature type="active site" description="Proton donor" evidence="1">
    <location>
        <position position="466"/>
    </location>
</feature>
<reference key="1">
    <citation type="journal article" date="2003" name="J. Bacteriol.">
        <title>Complete genome sequence of the ammonia-oxidizing bacterium and obligate chemolithoautotroph Nitrosomonas europaea.</title>
        <authorList>
            <person name="Chain P."/>
            <person name="Lamerdin J.E."/>
            <person name="Larimer F.W."/>
            <person name="Regala W."/>
            <person name="Lao V."/>
            <person name="Land M.L."/>
            <person name="Hauser L."/>
            <person name="Hooper A.B."/>
            <person name="Klotz M.G."/>
            <person name="Norton J."/>
            <person name="Sayavedra-Soto L.A."/>
            <person name="Arciero D.M."/>
            <person name="Hommes N.G."/>
            <person name="Whittaker M.M."/>
            <person name="Arp D.J."/>
        </authorList>
    </citation>
    <scope>NUCLEOTIDE SEQUENCE [LARGE SCALE GENOMIC DNA]</scope>
    <source>
        <strain>ATCC 19718 / CIP 103999 / KCTC 2705 / NBRC 14298</strain>
    </source>
</reference>